<name>SCN4B_RAT</name>
<keyword id="KW-1003">Cell membrane</keyword>
<keyword id="KW-1015">Disulfide bond</keyword>
<keyword id="KW-0325">Glycoprotein</keyword>
<keyword id="KW-0393">Immunoglobulin domain</keyword>
<keyword id="KW-0406">Ion transport</keyword>
<keyword id="KW-0472">Membrane</keyword>
<keyword id="KW-1185">Reference proteome</keyword>
<keyword id="KW-0732">Signal</keyword>
<keyword id="KW-0915">Sodium</keyword>
<keyword id="KW-0739">Sodium transport</keyword>
<keyword id="KW-0812">Transmembrane</keyword>
<keyword id="KW-1133">Transmembrane helix</keyword>
<keyword id="KW-0813">Transport</keyword>
<gene>
    <name evidence="10" type="primary">Scn4b</name>
</gene>
<reference key="1">
    <citation type="journal article" date="2004" name="Nature">
        <title>Genome sequence of the Brown Norway rat yields insights into mammalian evolution.</title>
        <authorList>
            <person name="Gibbs R.A."/>
            <person name="Weinstock G.M."/>
            <person name="Metzker M.L."/>
            <person name="Muzny D.M."/>
            <person name="Sodergren E.J."/>
            <person name="Scherer S."/>
            <person name="Scott G."/>
            <person name="Steffen D."/>
            <person name="Worley K.C."/>
            <person name="Burch P.E."/>
            <person name="Okwuonu G."/>
            <person name="Hines S."/>
            <person name="Lewis L."/>
            <person name="Deramo C."/>
            <person name="Delgado O."/>
            <person name="Dugan-Rocha S."/>
            <person name="Miner G."/>
            <person name="Morgan M."/>
            <person name="Hawes A."/>
            <person name="Gill R."/>
            <person name="Holt R.A."/>
            <person name="Adams M.D."/>
            <person name="Amanatides P.G."/>
            <person name="Baden-Tillson H."/>
            <person name="Barnstead M."/>
            <person name="Chin S."/>
            <person name="Evans C.A."/>
            <person name="Ferriera S."/>
            <person name="Fosler C."/>
            <person name="Glodek A."/>
            <person name="Gu Z."/>
            <person name="Jennings D."/>
            <person name="Kraft C.L."/>
            <person name="Nguyen T."/>
            <person name="Pfannkoch C.M."/>
            <person name="Sitter C."/>
            <person name="Sutton G.G."/>
            <person name="Venter J.C."/>
            <person name="Woodage T."/>
            <person name="Smith D."/>
            <person name="Lee H.-M."/>
            <person name="Gustafson E."/>
            <person name="Cahill P."/>
            <person name="Kana A."/>
            <person name="Doucette-Stamm L."/>
            <person name="Weinstock K."/>
            <person name="Fechtel K."/>
            <person name="Weiss R.B."/>
            <person name="Dunn D.M."/>
            <person name="Green E.D."/>
            <person name="Blakesley R.W."/>
            <person name="Bouffard G.G."/>
            <person name="De Jong P.J."/>
            <person name="Osoegawa K."/>
            <person name="Zhu B."/>
            <person name="Marra M."/>
            <person name="Schein J."/>
            <person name="Bosdet I."/>
            <person name="Fjell C."/>
            <person name="Jones S."/>
            <person name="Krzywinski M."/>
            <person name="Mathewson C."/>
            <person name="Siddiqui A."/>
            <person name="Wye N."/>
            <person name="McPherson J."/>
            <person name="Zhao S."/>
            <person name="Fraser C.M."/>
            <person name="Shetty J."/>
            <person name="Shatsman S."/>
            <person name="Geer K."/>
            <person name="Chen Y."/>
            <person name="Abramzon S."/>
            <person name="Nierman W.C."/>
            <person name="Havlak P.H."/>
            <person name="Chen R."/>
            <person name="Durbin K.J."/>
            <person name="Egan A."/>
            <person name="Ren Y."/>
            <person name="Song X.-Z."/>
            <person name="Li B."/>
            <person name="Liu Y."/>
            <person name="Qin X."/>
            <person name="Cawley S."/>
            <person name="Cooney A.J."/>
            <person name="D'Souza L.M."/>
            <person name="Martin K."/>
            <person name="Wu J.Q."/>
            <person name="Gonzalez-Garay M.L."/>
            <person name="Jackson A.R."/>
            <person name="Kalafus K.J."/>
            <person name="McLeod M.P."/>
            <person name="Milosavljevic A."/>
            <person name="Virk D."/>
            <person name="Volkov A."/>
            <person name="Wheeler D.A."/>
            <person name="Zhang Z."/>
            <person name="Bailey J.A."/>
            <person name="Eichler E.E."/>
            <person name="Tuzun E."/>
            <person name="Birney E."/>
            <person name="Mongin E."/>
            <person name="Ureta-Vidal A."/>
            <person name="Woodwark C."/>
            <person name="Zdobnov E."/>
            <person name="Bork P."/>
            <person name="Suyama M."/>
            <person name="Torrents D."/>
            <person name="Alexandersson M."/>
            <person name="Trask B.J."/>
            <person name="Young J.M."/>
            <person name="Huang H."/>
            <person name="Wang H."/>
            <person name="Xing H."/>
            <person name="Daniels S."/>
            <person name="Gietzen D."/>
            <person name="Schmidt J."/>
            <person name="Stevens K."/>
            <person name="Vitt U."/>
            <person name="Wingrove J."/>
            <person name="Camara F."/>
            <person name="Mar Alba M."/>
            <person name="Abril J.F."/>
            <person name="Guigo R."/>
            <person name="Smit A."/>
            <person name="Dubchak I."/>
            <person name="Rubin E.M."/>
            <person name="Couronne O."/>
            <person name="Poliakov A."/>
            <person name="Huebner N."/>
            <person name="Ganten D."/>
            <person name="Goesele C."/>
            <person name="Hummel O."/>
            <person name="Kreitler T."/>
            <person name="Lee Y.-A."/>
            <person name="Monti J."/>
            <person name="Schulz H."/>
            <person name="Zimdahl H."/>
            <person name="Himmelbauer H."/>
            <person name="Lehrach H."/>
            <person name="Jacob H.J."/>
            <person name="Bromberg S."/>
            <person name="Gullings-Handley J."/>
            <person name="Jensen-Seaman M.I."/>
            <person name="Kwitek A.E."/>
            <person name="Lazar J."/>
            <person name="Pasko D."/>
            <person name="Tonellato P.J."/>
            <person name="Twigger S."/>
            <person name="Ponting C.P."/>
            <person name="Duarte J.M."/>
            <person name="Rice S."/>
            <person name="Goodstadt L."/>
            <person name="Beatson S.A."/>
            <person name="Emes R.D."/>
            <person name="Winter E.E."/>
            <person name="Webber C."/>
            <person name="Brandt P."/>
            <person name="Nyakatura G."/>
            <person name="Adetobi M."/>
            <person name="Chiaromonte F."/>
            <person name="Elnitski L."/>
            <person name="Eswara P."/>
            <person name="Hardison R.C."/>
            <person name="Hou M."/>
            <person name="Kolbe D."/>
            <person name="Makova K."/>
            <person name="Miller W."/>
            <person name="Nekrutenko A."/>
            <person name="Riemer C."/>
            <person name="Schwartz S."/>
            <person name="Taylor J."/>
            <person name="Yang S."/>
            <person name="Zhang Y."/>
            <person name="Lindpaintner K."/>
            <person name="Andrews T.D."/>
            <person name="Caccamo M."/>
            <person name="Clamp M."/>
            <person name="Clarke L."/>
            <person name="Curwen V."/>
            <person name="Durbin R.M."/>
            <person name="Eyras E."/>
            <person name="Searle S.M."/>
            <person name="Cooper G.M."/>
            <person name="Batzoglou S."/>
            <person name="Brudno M."/>
            <person name="Sidow A."/>
            <person name="Stone E.A."/>
            <person name="Payseur B.A."/>
            <person name="Bourque G."/>
            <person name="Lopez-Otin C."/>
            <person name="Puente X.S."/>
            <person name="Chakrabarti K."/>
            <person name="Chatterji S."/>
            <person name="Dewey C."/>
            <person name="Pachter L."/>
            <person name="Bray N."/>
            <person name="Yap V.B."/>
            <person name="Caspi A."/>
            <person name="Tesler G."/>
            <person name="Pevzner P.A."/>
            <person name="Haussler D."/>
            <person name="Roskin K.M."/>
            <person name="Baertsch R."/>
            <person name="Clawson H."/>
            <person name="Furey T.S."/>
            <person name="Hinrichs A.S."/>
            <person name="Karolchik D."/>
            <person name="Kent W.J."/>
            <person name="Rosenbloom K.R."/>
            <person name="Trumbower H."/>
            <person name="Weirauch M."/>
            <person name="Cooper D.N."/>
            <person name="Stenson P.D."/>
            <person name="Ma B."/>
            <person name="Brent M."/>
            <person name="Arumugam M."/>
            <person name="Shteynberg D."/>
            <person name="Copley R.R."/>
            <person name="Taylor M.S."/>
            <person name="Riethman H."/>
            <person name="Mudunuri U."/>
            <person name="Peterson J."/>
            <person name="Guyer M."/>
            <person name="Felsenfeld A."/>
            <person name="Old S."/>
            <person name="Mockrin S."/>
            <person name="Collins F.S."/>
        </authorList>
    </citation>
    <scope>NUCLEOTIDE SEQUENCE [LARGE SCALE GENOMIC DNA]</scope>
    <source>
        <strain>Brown Norway</strain>
    </source>
</reference>
<reference key="2">
    <citation type="journal article" date="2003" name="J. Neurosci.">
        <title>Sodium channel beta4, a new disulfide-linked auxiliary subunit with similarity to beta2.</title>
        <authorList>
            <person name="Yu F.H."/>
            <person name="Westenbroek R.E."/>
            <person name="Silos-Santiago I."/>
            <person name="McCormick K.A."/>
            <person name="Lawson D."/>
            <person name="Ge P."/>
            <person name="Ferriera H."/>
            <person name="Lilly J."/>
            <person name="DiStefano P.S."/>
            <person name="Catterall W.A."/>
            <person name="Scheuer T."/>
            <person name="Curtis R."/>
        </authorList>
    </citation>
    <scope>NUCLEOTIDE SEQUENCE [MRNA] OF 134-228</scope>
    <scope>FUNCTION</scope>
    <scope>TISSUE SPECIFICITY</scope>
    <scope>SUBUNIT</scope>
    <scope>INTERACTION WITH SCN2A</scope>
    <scope>DISULFIDE BONDS</scope>
    <scope>SUBCELLULAR LOCATION</scope>
    <source>
        <strain>Sprague-Dawley</strain>
    </source>
</reference>
<reference key="3">
    <citation type="journal article" date="2013" name="J. Proteome Res.">
        <title>Site-specific glycan-peptide analysis for determination of N-glycoproteome heterogeneity.</title>
        <authorList>
            <person name="Parker B.L."/>
            <person name="Thaysen-Andersen M."/>
            <person name="Solis N."/>
            <person name="Scott N.E."/>
            <person name="Larsen M.R."/>
            <person name="Graham M.E."/>
            <person name="Packer N.H."/>
            <person name="Cordwell S.J."/>
        </authorList>
    </citation>
    <scope>GLYCOSYLATION [LARGE SCALE ANALYSIS] AT ASN-71</scope>
    <scope>IDENTIFICATION BY MASS SPECTROMETRY [LARGE SCALE ANALYSIS]</scope>
    <source>
        <tissue>Brain</tissue>
    </source>
</reference>
<reference key="4">
    <citation type="journal article" date="2016" name="Elife">
        <title>Binary architecture of the Nav1.2-beta2 signaling complex.</title>
        <authorList>
            <person name="Das S."/>
            <person name="Gilchrist J."/>
            <person name="Bosmans F."/>
            <person name="Van Petegem F."/>
        </authorList>
    </citation>
    <scope>SUBUNIT</scope>
    <scope>DISULFIDE BOND</scope>
</reference>
<proteinExistence type="evidence at protein level"/>
<comment type="function">
    <text evidence="1 5">Regulatory subunit of multiple voltage-gated sodium (Nav) channels directly mediating the depolarization of excitable membranes. Navs, also called VGSCs (voltage-gated sodium channels) or VDSCs (voltage-dependent sodium channels), operate by switching between closed and open conformations depending on the voltage difference across the membrane. In the open conformation they allow Na(+) ions to selectively pass through the pore, along their electrochemical gradient. The influx of Na+ ions provokes membrane depolarization, initiating the propagation of electrical signals throughout cells and tissues. The accessory beta subunits participate in localization and functional modulation of the Nav channels (PubMed:12930796). Modulates the activity of SCN1A/Nav1.1 (By similarity). Modulates the activity of SCN2A/Nav1.2 (PubMed:12930796).</text>
</comment>
<comment type="subunit">
    <text evidence="1 5 6">A voltage-gated sodium (Nav) channel consists of an ion-conducting pore-forming alpha subunit functional on its own that is regulated by one or more beta subunits. The beta subunit SCN4B is disulfide-linked to the pore-forming alpha subunit (PubMed:12930796, PubMed:26894959). Interacts with SCN1A; regulatory subunit of SCN1A/Nav1.1 (By similarity). Interacts with SCN2A; regulatory subunit of SCN2A/Nav1.2 (PubMed:12930796, PubMed:26894959).</text>
</comment>
<comment type="subcellular location">
    <subcellularLocation>
        <location evidence="5">Cell membrane</location>
        <topology evidence="1">Single-pass type I membrane protein</topology>
    </subcellularLocation>
</comment>
<comment type="tissue specificity">
    <text evidence="5">Expressed at a high level in dorsal root ganglia, at a lower level in brain, spinal cord, skeletal muscle and heart.</text>
</comment>
<comment type="PTM">
    <text evidence="1">Contains an interchain disulfide bond with SCN2A.</text>
</comment>
<comment type="similarity">
    <text evidence="7">Belongs to the sodium channel auxiliary subunit SCN4B (TC 8.A.17) family.</text>
</comment>
<accession>Q7M730</accession>
<accession>Q80Z84</accession>
<feature type="signal peptide" evidence="2">
    <location>
        <begin position="1"/>
        <end position="30"/>
    </location>
</feature>
<feature type="chain" id="PRO_0000014939" description="Sodium channel regulatory subunit beta-4">
    <location>
        <begin position="31"/>
        <end position="228"/>
    </location>
</feature>
<feature type="topological domain" description="Extracellular" evidence="2">
    <location>
        <begin position="31"/>
        <end position="161"/>
    </location>
</feature>
<feature type="transmembrane region" description="Helical" evidence="2">
    <location>
        <begin position="162"/>
        <end position="182"/>
    </location>
</feature>
<feature type="topological domain" description="Cytoplasmic" evidence="2">
    <location>
        <begin position="183"/>
        <end position="228"/>
    </location>
</feature>
<feature type="domain" description="Ig-like C2-type" evidence="3">
    <location>
        <begin position="31"/>
        <end position="148"/>
    </location>
</feature>
<feature type="region of interest" description="Disordered" evidence="4">
    <location>
        <begin position="199"/>
        <end position="228"/>
    </location>
</feature>
<feature type="compositionally biased region" description="Polar residues" evidence="4">
    <location>
        <begin position="203"/>
        <end position="213"/>
    </location>
</feature>
<feature type="compositionally biased region" description="Basic and acidic residues" evidence="4">
    <location>
        <begin position="219"/>
        <end position="228"/>
    </location>
</feature>
<feature type="glycosylation site" description="N-linked (GlcNAc...) asparagine" evidence="2">
    <location>
        <position position="45"/>
    </location>
</feature>
<feature type="glycosylation site" description="N-linked (GlcNAc...) asparagine" evidence="11">
    <location>
        <position position="71"/>
    </location>
</feature>
<feature type="glycosylation site" description="N-linked (GlcNAc...) asparagine" evidence="2">
    <location>
        <position position="113"/>
    </location>
</feature>
<feature type="glycosylation site" description="N-linked (GlcNAc...) asparagine" evidence="2">
    <location>
        <position position="142"/>
    </location>
</feature>
<feature type="disulfide bond" evidence="1 3">
    <location>
        <begin position="53"/>
        <end position="131"/>
    </location>
</feature>
<feature type="disulfide bond" description="Interchain; with alpha subunit" evidence="1 3 9">
    <location>
        <position position="58"/>
    </location>
</feature>
<evidence type="ECO:0000250" key="1">
    <source>
        <dbReference type="UniProtKB" id="Q8IWT1"/>
    </source>
</evidence>
<evidence type="ECO:0000255" key="2"/>
<evidence type="ECO:0000255" key="3">
    <source>
        <dbReference type="PROSITE-ProRule" id="PRU00114"/>
    </source>
</evidence>
<evidence type="ECO:0000256" key="4">
    <source>
        <dbReference type="SAM" id="MobiDB-lite"/>
    </source>
</evidence>
<evidence type="ECO:0000269" key="5">
    <source>
    </source>
</evidence>
<evidence type="ECO:0000269" key="6">
    <source>
    </source>
</evidence>
<evidence type="ECO:0000305" key="7"/>
<evidence type="ECO:0000305" key="8">
    <source>
    </source>
</evidence>
<evidence type="ECO:0000305" key="9">
    <source>
    </source>
</evidence>
<evidence type="ECO:0000312" key="10">
    <source>
        <dbReference type="RGD" id="631404"/>
    </source>
</evidence>
<evidence type="ECO:0007744" key="11">
    <source>
    </source>
</evidence>
<sequence length="228" mass="25247">MSRAGNRGNTQARWLGIGLLGLFLLPMYLSLEVSVGKATTIYAINGSAILLPCTFSSCYGFENLYFRWSYNNSETSRILIDGIVKNDKSDPKVRVKDDDRITLEGSTKEKMNNISILLSDLEFSDTGRYTCFVRNPKEKDLNNSATIFLQVVDKLEEVDNTVTLIILAVVGGVIGLLVCILLLKKLITFILKKTREKKKECLVSSSGNDNTENGLPGSKAEEKPPTKV</sequence>
<dbReference type="EMBL" id="AC129680">
    <property type="status" value="NOT_ANNOTATED_CDS"/>
    <property type="molecule type" value="Genomic_DNA"/>
</dbReference>
<dbReference type="EMBL" id="AC129457">
    <property type="status" value="NOT_ANNOTATED_CDS"/>
    <property type="molecule type" value="Genomic_DNA"/>
</dbReference>
<dbReference type="EMBL" id="AC136555">
    <property type="status" value="NOT_ANNOTATED_CDS"/>
    <property type="molecule type" value="Genomic_DNA"/>
</dbReference>
<dbReference type="EMBL" id="AF544988">
    <property type="protein sequence ID" value="AAO62631.1"/>
    <property type="molecule type" value="mRNA"/>
</dbReference>
<dbReference type="EMBL" id="BK001030">
    <property type="protein sequence ID" value="DAA01204.1"/>
    <property type="molecule type" value="mRNA"/>
</dbReference>
<dbReference type="RefSeq" id="NP_001008880.1">
    <property type="nucleotide sequence ID" value="NM_001008880.2"/>
</dbReference>
<dbReference type="SMR" id="Q7M730"/>
<dbReference type="FunCoup" id="Q7M730">
    <property type="interactions" value="886"/>
</dbReference>
<dbReference type="STRING" id="10116.ENSRNOP00000033284"/>
<dbReference type="GlyCosmos" id="Q7M730">
    <property type="glycosylation" value="4 sites, 2 glycans"/>
</dbReference>
<dbReference type="GlyGen" id="Q7M730">
    <property type="glycosylation" value="4 sites, 2 N-linked glycans (1 site)"/>
</dbReference>
<dbReference type="iPTMnet" id="Q7M730"/>
<dbReference type="PhosphoSitePlus" id="Q7M730"/>
<dbReference type="PaxDb" id="10116-ENSRNOP00000033284"/>
<dbReference type="ABCD" id="Q7M730">
    <property type="antibodies" value="1 sequenced antibody"/>
</dbReference>
<dbReference type="Ensembl" id="ENSRNOT00000030152.3">
    <property type="protein sequence ID" value="ENSRNOP00000033284.2"/>
    <property type="gene ID" value="ENSRNOG00000026679.3"/>
</dbReference>
<dbReference type="GeneID" id="315611"/>
<dbReference type="KEGG" id="rno:315611"/>
<dbReference type="UCSC" id="RGD:631404">
    <property type="organism name" value="rat"/>
</dbReference>
<dbReference type="AGR" id="RGD:631404"/>
<dbReference type="CTD" id="6330"/>
<dbReference type="RGD" id="631404">
    <property type="gene designation" value="Scn4b"/>
</dbReference>
<dbReference type="eggNOG" id="ENOG502QTZ6">
    <property type="taxonomic scope" value="Eukaryota"/>
</dbReference>
<dbReference type="GeneTree" id="ENSGT01030000234556"/>
<dbReference type="HOGENOM" id="CLU_104235_0_0_1"/>
<dbReference type="InParanoid" id="Q7M730"/>
<dbReference type="OMA" id="HQATIIL"/>
<dbReference type="OrthoDB" id="8778219at2759"/>
<dbReference type="PhylomeDB" id="Q7M730"/>
<dbReference type="TreeFam" id="TF331728"/>
<dbReference type="PRO" id="PR:Q7M730"/>
<dbReference type="Proteomes" id="UP000002494">
    <property type="component" value="Chromosome 8"/>
</dbReference>
<dbReference type="Bgee" id="ENSRNOG00000026679">
    <property type="expression patterns" value="Expressed in skeletal muscle tissue and 10 other cell types or tissues"/>
</dbReference>
<dbReference type="GO" id="GO:0014704">
    <property type="term" value="C:intercalated disc"/>
    <property type="evidence" value="ECO:0000266"/>
    <property type="project" value="RGD"/>
</dbReference>
<dbReference type="GO" id="GO:0005886">
    <property type="term" value="C:plasma membrane"/>
    <property type="evidence" value="ECO:0000250"/>
    <property type="project" value="UniProtKB"/>
</dbReference>
<dbReference type="GO" id="GO:0001518">
    <property type="term" value="C:voltage-gated sodium channel complex"/>
    <property type="evidence" value="ECO:0000250"/>
    <property type="project" value="UniProtKB"/>
</dbReference>
<dbReference type="GO" id="GO:0017080">
    <property type="term" value="F:sodium channel regulator activity"/>
    <property type="evidence" value="ECO:0000250"/>
    <property type="project" value="UniProtKB"/>
</dbReference>
<dbReference type="GO" id="GO:0044325">
    <property type="term" value="F:transmembrane transporter binding"/>
    <property type="evidence" value="ECO:0000266"/>
    <property type="project" value="RGD"/>
</dbReference>
<dbReference type="GO" id="GO:0005248">
    <property type="term" value="F:voltage-gated sodium channel activity"/>
    <property type="evidence" value="ECO:0000266"/>
    <property type="project" value="RGD"/>
</dbReference>
<dbReference type="GO" id="GO:0086006">
    <property type="term" value="F:voltage-gated sodium channel activity involved in cardiac muscle cell action potential"/>
    <property type="evidence" value="ECO:0000266"/>
    <property type="project" value="RGD"/>
</dbReference>
<dbReference type="GO" id="GO:0086016">
    <property type="term" value="P:AV node cell action potential"/>
    <property type="evidence" value="ECO:0000266"/>
    <property type="project" value="RGD"/>
</dbReference>
<dbReference type="GO" id="GO:0061337">
    <property type="term" value="P:cardiac conduction"/>
    <property type="evidence" value="ECO:0000318"/>
    <property type="project" value="GO_Central"/>
</dbReference>
<dbReference type="GO" id="GO:0086002">
    <property type="term" value="P:cardiac muscle cell action potential involved in contraction"/>
    <property type="evidence" value="ECO:0000266"/>
    <property type="project" value="RGD"/>
</dbReference>
<dbReference type="GO" id="GO:0060048">
    <property type="term" value="P:cardiac muscle contraction"/>
    <property type="evidence" value="ECO:0000266"/>
    <property type="project" value="RGD"/>
</dbReference>
<dbReference type="GO" id="GO:0051649">
    <property type="term" value="P:establishment of localization in cell"/>
    <property type="evidence" value="ECO:0000266"/>
    <property type="project" value="RGD"/>
</dbReference>
<dbReference type="GO" id="GO:0086012">
    <property type="term" value="P:membrane depolarization during cardiac muscle cell action potential"/>
    <property type="evidence" value="ECO:0000266"/>
    <property type="project" value="RGD"/>
</dbReference>
<dbReference type="GO" id="GO:0019228">
    <property type="term" value="P:neuronal action potential"/>
    <property type="evidence" value="ECO:0000250"/>
    <property type="project" value="UniProtKB"/>
</dbReference>
<dbReference type="GO" id="GO:0010765">
    <property type="term" value="P:positive regulation of sodium ion transport"/>
    <property type="evidence" value="ECO:0000266"/>
    <property type="project" value="RGD"/>
</dbReference>
<dbReference type="GO" id="GO:0086091">
    <property type="term" value="P:regulation of heart rate by cardiac conduction"/>
    <property type="evidence" value="ECO:0000266"/>
    <property type="project" value="RGD"/>
</dbReference>
<dbReference type="GO" id="GO:0060307">
    <property type="term" value="P:regulation of ventricular cardiac muscle cell membrane repolarization"/>
    <property type="evidence" value="ECO:0000266"/>
    <property type="project" value="RGD"/>
</dbReference>
<dbReference type="GO" id="GO:0035725">
    <property type="term" value="P:sodium ion transmembrane transport"/>
    <property type="evidence" value="ECO:0000266"/>
    <property type="project" value="RGD"/>
</dbReference>
<dbReference type="GO" id="GO:0006814">
    <property type="term" value="P:sodium ion transport"/>
    <property type="evidence" value="ECO:0000266"/>
    <property type="project" value="RGD"/>
</dbReference>
<dbReference type="FunFam" id="2.60.40.10:FF:001260">
    <property type="entry name" value="Sodium channel subunit beta-4"/>
    <property type="match status" value="1"/>
</dbReference>
<dbReference type="Gene3D" id="2.60.40.10">
    <property type="entry name" value="Immunoglobulins"/>
    <property type="match status" value="1"/>
</dbReference>
<dbReference type="InterPro" id="IPR007110">
    <property type="entry name" value="Ig-like_dom"/>
</dbReference>
<dbReference type="InterPro" id="IPR036179">
    <property type="entry name" value="Ig-like_dom_sf"/>
</dbReference>
<dbReference type="InterPro" id="IPR013783">
    <property type="entry name" value="Ig-like_fold"/>
</dbReference>
<dbReference type="InterPro" id="IPR003599">
    <property type="entry name" value="Ig_sub"/>
</dbReference>
<dbReference type="InterPro" id="IPR013106">
    <property type="entry name" value="Ig_V-set"/>
</dbReference>
<dbReference type="InterPro" id="IPR000920">
    <property type="entry name" value="Myelin_P0-rel"/>
</dbReference>
<dbReference type="PANTHER" id="PTHR13869">
    <property type="entry name" value="MYELIN P0 RELATED"/>
    <property type="match status" value="1"/>
</dbReference>
<dbReference type="PANTHER" id="PTHR13869:SF14">
    <property type="entry name" value="SODIUM CHANNEL SUBUNIT BETA-4"/>
    <property type="match status" value="1"/>
</dbReference>
<dbReference type="Pfam" id="PF07686">
    <property type="entry name" value="V-set"/>
    <property type="match status" value="1"/>
</dbReference>
<dbReference type="SMART" id="SM00409">
    <property type="entry name" value="IG"/>
    <property type="match status" value="1"/>
</dbReference>
<dbReference type="SUPFAM" id="SSF48726">
    <property type="entry name" value="Immunoglobulin"/>
    <property type="match status" value="1"/>
</dbReference>
<dbReference type="PROSITE" id="PS50835">
    <property type="entry name" value="IG_LIKE"/>
    <property type="match status" value="1"/>
</dbReference>
<protein>
    <recommendedName>
        <fullName evidence="8">Sodium channel regulatory subunit beta-4</fullName>
    </recommendedName>
</protein>
<organism>
    <name type="scientific">Rattus norvegicus</name>
    <name type="common">Rat</name>
    <dbReference type="NCBI Taxonomy" id="10116"/>
    <lineage>
        <taxon>Eukaryota</taxon>
        <taxon>Metazoa</taxon>
        <taxon>Chordata</taxon>
        <taxon>Craniata</taxon>
        <taxon>Vertebrata</taxon>
        <taxon>Euteleostomi</taxon>
        <taxon>Mammalia</taxon>
        <taxon>Eutheria</taxon>
        <taxon>Euarchontoglires</taxon>
        <taxon>Glires</taxon>
        <taxon>Rodentia</taxon>
        <taxon>Myomorpha</taxon>
        <taxon>Muroidea</taxon>
        <taxon>Muridae</taxon>
        <taxon>Murinae</taxon>
        <taxon>Rattus</taxon>
    </lineage>
</organism>